<comment type="function">
    <text evidence="1 2 3 5 6 7 8 9 10 11 12 13">Involved in double-strand break (DSB) formation during meiotic recombination through stabilization of SPO11 association with meiotic chromosome and helping SPO11 to recruit other DSB proteins like REC102 and REC104 to meiotic chromosomes. Also a component of the SKI complex involved in 3'-mRNA degradation pathway. Represses dsRNA virus propagation by specifically blocking translation of viral mRNAs, perhaps recognizing the absence of CAP or poly(A). Essential for controlling the propagation of M double-stranded RNA (dsRNA) and thus for preventing virus-induced cytopathology.</text>
</comment>
<comment type="subunit">
    <text evidence="1 2 6 8">Component of the SKI complex composed of at least SKI2, SKI3 and SKI8. The SKI complex interacts with SKI7, which makes the link between the SKI complex and the exosome in order to perform mRNA degradation.</text>
</comment>
<comment type="interaction">
    <interactant intactId="EBI-17260">
        <id>Q02793</id>
    </interactant>
    <interactant intactId="EBI-1851">
        <id>P35207</id>
        <label>SKI2</label>
    </interactant>
    <organismsDiffer>false</organismsDiffer>
    <experiments>12</experiments>
</comment>
<comment type="interaction">
    <interactant intactId="EBI-17260">
        <id>Q02793</id>
    </interactant>
    <interactant intactId="EBI-1861">
        <id>P17883</id>
        <label>SKI3</label>
    </interactant>
    <organismsDiffer>false</organismsDiffer>
    <experiments>9</experiments>
</comment>
<comment type="interaction">
    <interactant intactId="EBI-17260">
        <id>Q02793</id>
    </interactant>
    <interactant intactId="EBI-1389">
        <id>Q08491</id>
        <label>SKI7</label>
    </interactant>
    <organismsDiffer>false</organismsDiffer>
    <experiments>3</experiments>
</comment>
<comment type="interaction">
    <interactant intactId="EBI-17260">
        <id>Q02793</id>
    </interactant>
    <interactant intactId="EBI-17705">
        <id>P23179</id>
        <label>SPO11</label>
    </interactant>
    <organismsDiffer>false</organismsDiffer>
    <experiments>9</experiments>
</comment>
<comment type="subcellular location">
    <subcellularLocation>
        <location>Cytoplasm</location>
    </subcellularLocation>
    <subcellularLocation>
        <location>Nucleus</location>
    </subcellularLocation>
    <subcellularLocation>
        <location>Chromosome</location>
    </subcellularLocation>
    <text>Relocalizes from the cytoplasm to the nucleus and is recruited to chromosomes by SPO11 during meiotic prophase.</text>
</comment>
<comment type="miscellaneous">
    <text evidence="4">Present with 1710 molecules/cell in log phase SD medium.</text>
</comment>
<comment type="similarity">
    <text evidence="14">Belongs to the SKI8 family.</text>
</comment>
<protein>
    <recommendedName>
        <fullName>Antiviral protein SKI8</fullName>
    </recommendedName>
    <alternativeName>
        <fullName>Superkiller protein 8</fullName>
    </alternativeName>
</protein>
<evidence type="ECO:0000269" key="1">
    <source>
    </source>
</evidence>
<evidence type="ECO:0000269" key="2">
    <source>
    </source>
</evidence>
<evidence type="ECO:0000269" key="3">
    <source>
    </source>
</evidence>
<evidence type="ECO:0000269" key="4">
    <source>
    </source>
</evidence>
<evidence type="ECO:0000269" key="5">
    <source>
    </source>
</evidence>
<evidence type="ECO:0000269" key="6">
    <source>
    </source>
</evidence>
<evidence type="ECO:0000269" key="7">
    <source>
    </source>
</evidence>
<evidence type="ECO:0000269" key="8">
    <source>
    </source>
</evidence>
<evidence type="ECO:0000269" key="9">
    <source>
    </source>
</evidence>
<evidence type="ECO:0000269" key="10">
    <source>
    </source>
</evidence>
<evidence type="ECO:0000269" key="11">
    <source>
    </source>
</evidence>
<evidence type="ECO:0000269" key="12">
    <source>
    </source>
</evidence>
<evidence type="ECO:0000269" key="13">
    <source>
    </source>
</evidence>
<evidence type="ECO:0000305" key="14"/>
<evidence type="ECO:0007829" key="15">
    <source>
        <dbReference type="PDB" id="1SQ9"/>
    </source>
</evidence>
<evidence type="ECO:0007829" key="16">
    <source>
        <dbReference type="PDB" id="8QCA"/>
    </source>
</evidence>
<evidence type="ECO:0007829" key="17">
    <source>
        <dbReference type="PDB" id="8QCB"/>
    </source>
</evidence>
<evidence type="ECO:0007829" key="18">
    <source>
        <dbReference type="PDB" id="8URQ"/>
    </source>
</evidence>
<accession>Q02793</accession>
<accession>D6VTU2</accession>
<proteinExistence type="evidence at protein level"/>
<reference key="1">
    <citation type="journal article" date="1993" name="Yeast">
        <title>A yeast antiviral protein, SKI8, shares a repeated amino acid sequence pattern with beta-subunits of G proteins and several other proteins.</title>
        <authorList>
            <person name="Matsumoto Y."/>
            <person name="Sarkar G."/>
            <person name="Sommer S.S."/>
            <person name="Wickner R.B."/>
        </authorList>
    </citation>
    <scope>NUCLEOTIDE SEQUENCE [MRNA]</scope>
</reference>
<reference key="2">
    <citation type="journal article" date="1997" name="Yeast">
        <title>Analysis of 21.7 kb DNA sequence from the left arm of chromosome VII reveals 11 open reading frames: two correspond to new genes.</title>
        <authorList>
            <person name="Feuermann M."/>
            <person name="Simeonava L."/>
            <person name="Souciet J.-L."/>
            <person name="Potier S."/>
        </authorList>
    </citation>
    <scope>NUCLEOTIDE SEQUENCE [GENOMIC DNA]</scope>
</reference>
<reference key="3">
    <citation type="journal article" date="1997" name="Nature">
        <title>The nucleotide sequence of Saccharomyces cerevisiae chromosome VII.</title>
        <authorList>
            <person name="Tettelin H."/>
            <person name="Agostoni-Carbone M.L."/>
            <person name="Albermann K."/>
            <person name="Albers M."/>
            <person name="Arroyo J."/>
            <person name="Backes U."/>
            <person name="Barreiros T."/>
            <person name="Bertani I."/>
            <person name="Bjourson A.J."/>
            <person name="Brueckner M."/>
            <person name="Bruschi C.V."/>
            <person name="Carignani G."/>
            <person name="Castagnoli L."/>
            <person name="Cerdan E."/>
            <person name="Clemente M.L."/>
            <person name="Coblenz A."/>
            <person name="Coglievina M."/>
            <person name="Coissac E."/>
            <person name="Defoor E."/>
            <person name="Del Bino S."/>
            <person name="Delius H."/>
            <person name="Delneri D."/>
            <person name="de Wergifosse P."/>
            <person name="Dujon B."/>
            <person name="Durand P."/>
            <person name="Entian K.-D."/>
            <person name="Eraso P."/>
            <person name="Escribano V."/>
            <person name="Fabiani L."/>
            <person name="Fartmann B."/>
            <person name="Feroli F."/>
            <person name="Feuermann M."/>
            <person name="Frontali L."/>
            <person name="Garcia-Gonzalez M."/>
            <person name="Garcia-Saez M.I."/>
            <person name="Goffeau A."/>
            <person name="Guerreiro P."/>
            <person name="Hani J."/>
            <person name="Hansen M."/>
            <person name="Hebling U."/>
            <person name="Hernandez K."/>
            <person name="Heumann K."/>
            <person name="Hilger F."/>
            <person name="Hofmann B."/>
            <person name="Indge K.J."/>
            <person name="James C.M."/>
            <person name="Klima R."/>
            <person name="Koetter P."/>
            <person name="Kramer B."/>
            <person name="Kramer W."/>
            <person name="Lauquin G."/>
            <person name="Leuther H."/>
            <person name="Louis E.J."/>
            <person name="Maillier E."/>
            <person name="Marconi A."/>
            <person name="Martegani E."/>
            <person name="Mazon M.J."/>
            <person name="Mazzoni C."/>
            <person name="McReynolds A.D.K."/>
            <person name="Melchioretto P."/>
            <person name="Mewes H.-W."/>
            <person name="Minenkova O."/>
            <person name="Mueller-Auer S."/>
            <person name="Nawrocki A."/>
            <person name="Netter P."/>
            <person name="Neu R."/>
            <person name="Nombela C."/>
            <person name="Oliver S.G."/>
            <person name="Panzeri L."/>
            <person name="Paoluzi S."/>
            <person name="Plevani P."/>
            <person name="Portetelle D."/>
            <person name="Portillo F."/>
            <person name="Potier S."/>
            <person name="Purnelle B."/>
            <person name="Rieger M."/>
            <person name="Riles L."/>
            <person name="Rinaldi T."/>
            <person name="Robben J."/>
            <person name="Rodrigues-Pousada C."/>
            <person name="Rodriguez-Belmonte E."/>
            <person name="Rodriguez-Torres A.M."/>
            <person name="Rose M."/>
            <person name="Ruzzi M."/>
            <person name="Saliola M."/>
            <person name="Sanchez-Perez M."/>
            <person name="Schaefer B."/>
            <person name="Schaefer M."/>
            <person name="Scharfe M."/>
            <person name="Schmidheini T."/>
            <person name="Schreer A."/>
            <person name="Skala J."/>
            <person name="Souciet J.-L."/>
            <person name="Steensma H.Y."/>
            <person name="Talla E."/>
            <person name="Thierry A."/>
            <person name="Vandenbol M."/>
            <person name="van der Aart Q.J.M."/>
            <person name="Van Dyck L."/>
            <person name="Vanoni M."/>
            <person name="Verhasselt P."/>
            <person name="Voet M."/>
            <person name="Volckaert G."/>
            <person name="Wambutt R."/>
            <person name="Watson M.D."/>
            <person name="Weber N."/>
            <person name="Wedler E."/>
            <person name="Wedler H."/>
            <person name="Wipfli P."/>
            <person name="Wolf K."/>
            <person name="Wright L.F."/>
            <person name="Zaccaria P."/>
            <person name="Zimmermann M."/>
            <person name="Zollner A."/>
            <person name="Kleine K."/>
        </authorList>
    </citation>
    <scope>NUCLEOTIDE SEQUENCE [LARGE SCALE GENOMIC DNA]</scope>
    <source>
        <strain>ATCC 204508 / S288c</strain>
    </source>
</reference>
<reference key="4">
    <citation type="journal article" date="2014" name="G3 (Bethesda)">
        <title>The reference genome sequence of Saccharomyces cerevisiae: Then and now.</title>
        <authorList>
            <person name="Engel S.R."/>
            <person name="Dietrich F.S."/>
            <person name="Fisk D.G."/>
            <person name="Binkley G."/>
            <person name="Balakrishnan R."/>
            <person name="Costanzo M.C."/>
            <person name="Dwight S.S."/>
            <person name="Hitz B.C."/>
            <person name="Karra K."/>
            <person name="Nash R.S."/>
            <person name="Weng S."/>
            <person name="Wong E.D."/>
            <person name="Lloyd P."/>
            <person name="Skrzypek M.S."/>
            <person name="Miyasato S.R."/>
            <person name="Simison M."/>
            <person name="Cherry J.M."/>
        </authorList>
    </citation>
    <scope>GENOME REANNOTATION</scope>
    <source>
        <strain>ATCC 204508 / S288c</strain>
    </source>
</reference>
<reference key="5">
    <citation type="journal article" date="1997" name="Yeast">
        <title>Sequence analysis of 203 kilobases from Saccharomyces cerevisiae chromosome VII.</title>
        <authorList>
            <person name="Rieger M."/>
            <person name="Brueckner M."/>
            <person name="Schaefer M."/>
            <person name="Mueller-Auer S."/>
        </authorList>
    </citation>
    <scope>NUCLEOTIDE SEQUENCE [GENOMIC DNA] OF 1-245</scope>
    <source>
        <strain>ATCC 204508 / S288c</strain>
    </source>
</reference>
<reference key="6">
    <citation type="journal article" date="1984" name="Mol. Cell. Biol.">
        <title>Superkiller mutations in Saccharomyces cerevisiae suppress exclusion of M2 double-stranded RNA by L-A-HN and confer cold sensitivity in the presence of M and L-A-HN.</title>
        <authorList>
            <person name="Ridley S.P."/>
            <person name="Sommer S.S."/>
            <person name="Wickner R.B."/>
        </authorList>
    </citation>
    <scope>FUNCTION</scope>
</reference>
<reference key="7">
    <citation type="journal article" date="1987" name="Virology">
        <title>Gene disruption indicates that the only essential function of the SKI8 chromosomal gene is to protect Saccharomyces cerevisiae from viral cytopathology.</title>
        <authorList>
            <person name="Sommer S.S."/>
            <person name="Wickner R.B."/>
        </authorList>
    </citation>
    <scope>FUNCTION</scope>
</reference>
<reference key="8">
    <citation type="journal article" date="1995" name="Mol. Cell. Biol.">
        <title>Decoying the cap- mRNA degradation system by a double-stranded RNA virus and poly(A)- mRNA surveillance by a yeast antiviral system.</title>
        <authorList>
            <person name="Masison D.C."/>
            <person name="Blanc A."/>
            <person name="Ribas J.C."/>
            <person name="Carroll K."/>
            <person name="Sonenberg N."/>
            <person name="Wickner R.B."/>
        </authorList>
    </citation>
    <scope>FUNCTION</scope>
</reference>
<reference key="9">
    <citation type="journal article" date="1997" name="Genetics">
        <title>Molecular and genetic analysis of REC103, an early meiotic recombination gene in yeast.</title>
        <authorList>
            <person name="Gardiner J.M."/>
            <person name="Bullard S.A."/>
            <person name="Chrome C."/>
            <person name="Malone R.E."/>
        </authorList>
    </citation>
    <scope>FUNCTION</scope>
</reference>
<reference key="10">
    <citation type="journal article" date="1998" name="EMBO J.">
        <title>The 3' to 5' degradation of yeast mRNAs is a general mechanism for mRNA turnover that requires the SKI2 DEVH box protein and 3' to 5' exonucleases of the exosome complex.</title>
        <authorList>
            <person name="Anderson J.S.J."/>
            <person name="Parker R.P."/>
        </authorList>
    </citation>
    <scope>FUNCTION</scope>
</reference>
<reference key="11">
    <citation type="journal article" date="2000" name="RNA">
        <title>The yeast antiviral proteins Ski2p, Ski3p, and Ski8p exist as a complex in vivo.</title>
        <authorList>
            <person name="Brown J.T."/>
            <person name="Bai X."/>
            <person name="Johnson A.W."/>
        </authorList>
    </citation>
    <scope>FUNCTION</scope>
    <scope>IDENTIFICATION IN THE SKI COMPLEX</scope>
</reference>
<reference key="12">
    <citation type="journal article" date="2001" name="EMBO J.">
        <title>Ski7p G protein interacts with the exosome and the Ski complex for 3'-to-5' mRNA decay in yeast.</title>
        <authorList>
            <person name="Araki Y."/>
            <person name="Takahashi S."/>
            <person name="Kobayashi T."/>
            <person name="Kajiho H."/>
            <person name="Hoshino S."/>
            <person name="Katada T."/>
        </authorList>
    </citation>
    <scope>INTERACTION WITH SKI7</scope>
    <scope>FUNCTION OF THE SKI COMPLEX</scope>
</reference>
<reference key="13">
    <citation type="journal article" date="2001" name="RNA">
        <title>A cis-acting element known to block 3' mRNA degradation enhances expression of polyA-minus mRNA in wild-type yeast cells and phenocopies a ski mutant.</title>
        <authorList>
            <person name="Brown J.T."/>
            <person name="Johnson A.W."/>
        </authorList>
    </citation>
    <scope>FUNCTION OF THE SKI COMPLEX</scope>
</reference>
<reference key="14">
    <citation type="journal article" date="2003" name="Nature">
        <title>Global analysis of protein localization in budding yeast.</title>
        <authorList>
            <person name="Huh W.-K."/>
            <person name="Falvo J.V."/>
            <person name="Gerke L.C."/>
            <person name="Carroll A.S."/>
            <person name="Howson R.W."/>
            <person name="Weissman J.S."/>
            <person name="O'Shea E.K."/>
        </authorList>
    </citation>
    <scope>SUBCELLULAR LOCATION [LARGE SCALE ANALYSIS]</scope>
</reference>
<reference key="15">
    <citation type="journal article" date="2003" name="Nature">
        <title>Global analysis of protein expression in yeast.</title>
        <authorList>
            <person name="Ghaemmaghami S."/>
            <person name="Huh W.-K."/>
            <person name="Bower K."/>
            <person name="Howson R.W."/>
            <person name="Belle A."/>
            <person name="Dephoure N."/>
            <person name="O'Shea E.K."/>
            <person name="Weissman J.S."/>
        </authorList>
    </citation>
    <scope>LEVEL OF PROTEIN EXPRESSION [LARGE SCALE ANALYSIS]</scope>
</reference>
<reference key="16">
    <citation type="journal article" date="2003" name="Proc. Natl. Acad. Sci. U.S.A.">
        <title>Systematic, genome-wide identification of host genes affecting replication of a positive-strand RNA virus.</title>
        <authorList>
            <person name="Kushner D.B."/>
            <person name="Lindenbach B.D."/>
            <person name="Grdzelishvili V.Z."/>
            <person name="Noueiry A.O."/>
            <person name="Paul S.M."/>
            <person name="Ahlquist P."/>
        </authorList>
    </citation>
    <scope>FUNCTION</scope>
</reference>
<reference key="17">
    <citation type="journal article" date="2004" name="EMBO J.">
        <title>Spatial organization and dynamics of the association of Rec102 and Rec104 with meiotic chromosomes.</title>
        <authorList>
            <person name="Kee K."/>
            <person name="Protacio R.U."/>
            <person name="Arora C."/>
            <person name="Keeney S."/>
        </authorList>
    </citation>
    <scope>FUNCTION OF THE SKI8-SPO11 COMPLEX</scope>
</reference>
<reference key="18">
    <citation type="journal article" date="2004" name="Mol. Cell">
        <title>Antiviral protein Ski8 is a direct partner of Spo11 in meiotic DNA break formation, independent of its cytoplasmic role in RNA metabolism.</title>
        <authorList>
            <person name="Arora C."/>
            <person name="Kee K."/>
            <person name="Maleki S."/>
            <person name="Keeney S."/>
        </authorList>
    </citation>
    <scope>FUNCTION</scope>
    <scope>SUBCELLULAR LOCATION</scope>
    <scope>INTERACTION WITH SPO11</scope>
</reference>
<reference key="19">
    <citation type="journal article" date="2004" name="Science">
        <title>Structure-based assembly of protein complexes in yeast.</title>
        <authorList>
            <person name="Aloy P."/>
            <person name="Boettcher B."/>
            <person name="Ceulemans H."/>
            <person name="Leutwein C."/>
            <person name="Mellwig C."/>
            <person name="Fischer S."/>
            <person name="Gavin A.-C."/>
            <person name="Bork P."/>
            <person name="Superti-Furga G."/>
            <person name="Serrano L."/>
            <person name="Russell R.B."/>
        </authorList>
    </citation>
    <scope>MODELING OF THE SKI COMPLEX 3D-STRUCTURE</scope>
</reference>
<reference key="20">
    <citation type="journal article" date="2006" name="Mol. Genet. Genomics">
        <title>Both conserved and non-conserved regions of Spo11 are essential for meiotic recombination initiation in yeast.</title>
        <authorList>
            <person name="Nag D.K."/>
            <person name="Pata J.D."/>
            <person name="Sironi M."/>
            <person name="Flood D.R."/>
            <person name="Hart A.M."/>
        </authorList>
    </citation>
    <scope>FUNCTION</scope>
    <scope>INTERACTION WITH SPO11</scope>
</reference>
<reference key="21">
    <citation type="journal article" date="2004" name="Protein Sci.">
        <title>The structure of Ski8p, a protein regulating mRNA degradation: Implications for WD protein structure.</title>
        <authorList>
            <person name="Madrona A.Y."/>
            <person name="Wilson D.K."/>
        </authorList>
    </citation>
    <scope>X-RAY CRYSTALLOGRAPHY (1.9 ANGSTROMS)</scope>
</reference>
<reference key="22">
    <citation type="journal article" date="2004" name="Protein Sci.">
        <title>Crystal structure of Ski8p, a WD-repeat protein with dual roles in mRNA metabolism and meiotic recombination.</title>
        <authorList>
            <person name="Cheng Z."/>
            <person name="Liu Y."/>
            <person name="Wang C."/>
            <person name="Parker R."/>
            <person name="Song H."/>
        </authorList>
    </citation>
    <scope>X-RAY CRYSTALLOGRAPHY (2.1 ANGSTROMS)</scope>
</reference>
<sequence>MSKVFIATANAGKAHDADIFSVSACNSFTVSCSGDGYLKVWDNKLLDNENPKDKSYSHFVHKSGLHHVDVLQAIERDAFELCLVATTSFSGDLLFYRITREDETKKVIFEKLDLLDSDMKKHSFWALKWGASNDRLLSHRLVATDVKGTTYIWKFHPFADESNSLTLNWSPTLELQGTVESPMTPSQFATSVDISERGLIATGFNNGTVQISELSTLRPLYNFESQHSMINNSNSIRSVKFSPQGSLLAIAHDSNSFGCITLYETEFGERIGSLSVPTHSSQASLGEFAHSSWVMSLSFNDSGETLCSAGWDGKLRFWDVKTKERITTLNMHCDDIEIEEDILAVDEHGDSLAEPGVFDVKFLKKGWRSGMGADLNESLCCVCLDRSIRWFREAGGK</sequence>
<name>SKI8_YEAST</name>
<gene>
    <name type="primary">SKI8</name>
    <name type="synonym">REC103</name>
    <name type="ordered locus">YGL213C</name>
</gene>
<feature type="chain" id="PRO_0000051218" description="Antiviral protein SKI8">
    <location>
        <begin position="1"/>
        <end position="397"/>
    </location>
</feature>
<feature type="repeat" description="WD 1">
    <location>
        <begin position="21"/>
        <end position="42"/>
    </location>
</feature>
<feature type="repeat" description="WD 2">
    <location>
        <begin position="67"/>
        <end position="101"/>
    </location>
</feature>
<feature type="repeat" description="WD 3">
    <location>
        <begin position="126"/>
        <end position="157"/>
    </location>
</feature>
<feature type="repeat" description="WD 4">
    <location>
        <begin position="191"/>
        <end position="213"/>
    </location>
</feature>
<feature type="repeat" description="WD 5">
    <location>
        <begin position="238"/>
        <end position="264"/>
    </location>
</feature>
<feature type="repeat" description="WD 6">
    <location>
        <begin position="296"/>
        <end position="319"/>
    </location>
</feature>
<feature type="repeat" description="WD 7">
    <location>
        <begin position="359"/>
        <end position="392"/>
    </location>
</feature>
<feature type="strand" evidence="15">
    <location>
        <begin position="4"/>
        <end position="13"/>
    </location>
</feature>
<feature type="strand" evidence="15">
    <location>
        <begin position="15"/>
        <end position="17"/>
    </location>
</feature>
<feature type="strand" evidence="15">
    <location>
        <begin position="19"/>
        <end position="24"/>
    </location>
</feature>
<feature type="strand" evidence="15">
    <location>
        <begin position="26"/>
        <end position="33"/>
    </location>
</feature>
<feature type="strand" evidence="15">
    <location>
        <begin position="36"/>
        <end position="44"/>
    </location>
</feature>
<feature type="helix" evidence="15">
    <location>
        <begin position="51"/>
        <end position="54"/>
    </location>
</feature>
<feature type="strand" evidence="15">
    <location>
        <begin position="55"/>
        <end position="59"/>
    </location>
</feature>
<feature type="strand" evidence="15">
    <location>
        <begin position="65"/>
        <end position="75"/>
    </location>
</feature>
<feature type="turn" evidence="15">
    <location>
        <begin position="76"/>
        <end position="78"/>
    </location>
</feature>
<feature type="strand" evidence="15">
    <location>
        <begin position="79"/>
        <end position="88"/>
    </location>
</feature>
<feature type="strand" evidence="15">
    <location>
        <begin position="93"/>
        <end position="100"/>
    </location>
</feature>
<feature type="turn" evidence="15">
    <location>
        <begin position="102"/>
        <end position="104"/>
    </location>
</feature>
<feature type="strand" evidence="15">
    <location>
        <begin position="107"/>
        <end position="112"/>
    </location>
</feature>
<feature type="helix" evidence="15">
    <location>
        <begin position="119"/>
        <end position="121"/>
    </location>
</feature>
<feature type="strand" evidence="15">
    <location>
        <begin position="124"/>
        <end position="130"/>
    </location>
</feature>
<feature type="strand" evidence="17">
    <location>
        <begin position="133"/>
        <end position="135"/>
    </location>
</feature>
<feature type="strand" evidence="15">
    <location>
        <begin position="139"/>
        <end position="145"/>
    </location>
</feature>
<feature type="strand" evidence="15">
    <location>
        <begin position="150"/>
        <end position="160"/>
    </location>
</feature>
<feature type="helix" evidence="15">
    <location>
        <begin position="161"/>
        <end position="164"/>
    </location>
</feature>
<feature type="turn" evidence="15">
    <location>
        <begin position="165"/>
        <end position="167"/>
    </location>
</feature>
<feature type="strand" evidence="15">
    <location>
        <begin position="172"/>
        <end position="179"/>
    </location>
</feature>
<feature type="strand" evidence="15">
    <location>
        <begin position="182"/>
        <end position="185"/>
    </location>
</feature>
<feature type="strand" evidence="15">
    <location>
        <begin position="191"/>
        <end position="194"/>
    </location>
</feature>
<feature type="strand" evidence="15">
    <location>
        <begin position="198"/>
        <end position="203"/>
    </location>
</feature>
<feature type="strand" evidence="15">
    <location>
        <begin position="207"/>
        <end position="213"/>
    </location>
</feature>
<feature type="turn" evidence="15">
    <location>
        <begin position="214"/>
        <end position="217"/>
    </location>
</feature>
<feature type="strand" evidence="15">
    <location>
        <begin position="218"/>
        <end position="224"/>
    </location>
</feature>
<feature type="strand" evidence="16">
    <location>
        <begin position="229"/>
        <end position="232"/>
    </location>
</feature>
<feature type="strand" evidence="15">
    <location>
        <begin position="236"/>
        <end position="241"/>
    </location>
</feature>
<feature type="strand" evidence="18">
    <location>
        <begin position="243"/>
        <end position="246"/>
    </location>
</feature>
<feature type="strand" evidence="15">
    <location>
        <begin position="247"/>
        <end position="254"/>
    </location>
</feature>
<feature type="strand" evidence="15">
    <location>
        <begin position="257"/>
        <end position="264"/>
    </location>
</feature>
<feature type="turn" evidence="15">
    <location>
        <begin position="265"/>
        <end position="267"/>
    </location>
</feature>
<feature type="strand" evidence="15">
    <location>
        <begin position="270"/>
        <end position="274"/>
    </location>
</feature>
<feature type="strand" evidence="15">
    <location>
        <begin position="288"/>
        <end position="292"/>
    </location>
</feature>
<feature type="strand" evidence="15">
    <location>
        <begin position="294"/>
        <end position="299"/>
    </location>
</feature>
<feature type="strand" evidence="15">
    <location>
        <begin position="301"/>
        <end position="310"/>
    </location>
</feature>
<feature type="strand" evidence="15">
    <location>
        <begin position="313"/>
        <end position="319"/>
    </location>
</feature>
<feature type="turn" evidence="15">
    <location>
        <begin position="320"/>
        <end position="323"/>
    </location>
</feature>
<feature type="strand" evidence="15">
    <location>
        <begin position="324"/>
        <end position="330"/>
    </location>
</feature>
<feature type="helix" evidence="15">
    <location>
        <begin position="333"/>
        <end position="335"/>
    </location>
</feature>
<feature type="helix" evidence="15">
    <location>
        <begin position="339"/>
        <end position="341"/>
    </location>
</feature>
<feature type="strand" evidence="18">
    <location>
        <begin position="347"/>
        <end position="349"/>
    </location>
</feature>
<feature type="strand" evidence="15">
    <location>
        <begin position="357"/>
        <end position="363"/>
    </location>
</feature>
<feature type="turn" evidence="15">
    <location>
        <begin position="365"/>
        <end position="367"/>
    </location>
</feature>
<feature type="strand" evidence="15">
    <location>
        <begin position="368"/>
        <end position="370"/>
    </location>
</feature>
<feature type="strand" evidence="16">
    <location>
        <begin position="374"/>
        <end position="376"/>
    </location>
</feature>
<feature type="strand" evidence="15">
    <location>
        <begin position="378"/>
        <end position="383"/>
    </location>
</feature>
<feature type="turn" evidence="15">
    <location>
        <begin position="384"/>
        <end position="386"/>
    </location>
</feature>
<feature type="strand" evidence="15">
    <location>
        <begin position="387"/>
        <end position="394"/>
    </location>
</feature>
<dbReference type="EMBL" id="M96058">
    <property type="protein sequence ID" value="AAA35050.1"/>
    <property type="molecule type" value="mRNA"/>
</dbReference>
<dbReference type="EMBL" id="Z72736">
    <property type="protein sequence ID" value="CAA96930.1"/>
    <property type="molecule type" value="Genomic_DNA"/>
</dbReference>
<dbReference type="EMBL" id="BK006941">
    <property type="protein sequence ID" value="DAA07903.1"/>
    <property type="molecule type" value="Genomic_DNA"/>
</dbReference>
<dbReference type="PIR" id="S30023">
    <property type="entry name" value="S30023"/>
</dbReference>
<dbReference type="RefSeq" id="NP_011302.1">
    <property type="nucleotide sequence ID" value="NM_001181078.1"/>
</dbReference>
<dbReference type="PDB" id="1S4U">
    <property type="method" value="X-ray"/>
    <property type="resolution" value="2.10 A"/>
    <property type="chains" value="X=1-397"/>
</dbReference>
<dbReference type="PDB" id="1SQ9">
    <property type="method" value="X-ray"/>
    <property type="resolution" value="1.90 A"/>
    <property type="chains" value="A=1-397"/>
</dbReference>
<dbReference type="PDB" id="4BUJ">
    <property type="method" value="X-ray"/>
    <property type="resolution" value="3.70 A"/>
    <property type="chains" value="C/D/G/H=1-397"/>
</dbReference>
<dbReference type="PDB" id="5MC6">
    <property type="method" value="EM"/>
    <property type="resolution" value="3.80 A"/>
    <property type="chains" value="j/k=1-397"/>
</dbReference>
<dbReference type="PDB" id="8Q9T">
    <property type="method" value="EM"/>
    <property type="resolution" value="2.84 A"/>
    <property type="chains" value="C/D=1-397"/>
</dbReference>
<dbReference type="PDB" id="8QCA">
    <property type="method" value="EM"/>
    <property type="resolution" value="2.84 A"/>
    <property type="chains" value="C/D=1-397"/>
</dbReference>
<dbReference type="PDB" id="8QCB">
    <property type="method" value="EM"/>
    <property type="resolution" value="2.80 A"/>
    <property type="chains" value="C/D=1-397"/>
</dbReference>
<dbReference type="PDB" id="8URQ">
    <property type="method" value="EM"/>
    <property type="resolution" value="3.30 A"/>
    <property type="chains" value="C=1-397"/>
</dbReference>
<dbReference type="PDB" id="8URU">
    <property type="method" value="EM"/>
    <property type="resolution" value="3.70 A"/>
    <property type="chains" value="C=1-397"/>
</dbReference>
<dbReference type="PDBsum" id="1S4U"/>
<dbReference type="PDBsum" id="1SQ9"/>
<dbReference type="PDBsum" id="4BUJ"/>
<dbReference type="PDBsum" id="5MC6"/>
<dbReference type="PDBsum" id="8Q9T"/>
<dbReference type="PDBsum" id="8QCA"/>
<dbReference type="PDBsum" id="8QCB"/>
<dbReference type="PDBsum" id="8URQ"/>
<dbReference type="PDBsum" id="8URU"/>
<dbReference type="EMDB" id="EMD-18288"/>
<dbReference type="EMDB" id="EMD-18326"/>
<dbReference type="EMDB" id="EMD-18328"/>
<dbReference type="EMDB" id="EMD-3461"/>
<dbReference type="EMDB" id="EMD-42497"/>
<dbReference type="EMDB" id="EMD-42501"/>
<dbReference type="SMR" id="Q02793"/>
<dbReference type="BioGRID" id="33043">
    <property type="interactions" value="261"/>
</dbReference>
<dbReference type="ComplexPortal" id="CPX-1040">
    <property type="entry name" value="SKI complex"/>
</dbReference>
<dbReference type="DIP" id="DIP-1653N"/>
<dbReference type="FunCoup" id="Q02793">
    <property type="interactions" value="206"/>
</dbReference>
<dbReference type="IntAct" id="Q02793">
    <property type="interactions" value="23"/>
</dbReference>
<dbReference type="MINT" id="Q02793"/>
<dbReference type="STRING" id="4932.YGL213C"/>
<dbReference type="CarbonylDB" id="Q02793"/>
<dbReference type="iPTMnet" id="Q02793"/>
<dbReference type="PaxDb" id="4932-YGL213C"/>
<dbReference type="PeptideAtlas" id="Q02793"/>
<dbReference type="EnsemblFungi" id="YGL213C_mRNA">
    <property type="protein sequence ID" value="YGL213C"/>
    <property type="gene ID" value="YGL213C"/>
</dbReference>
<dbReference type="GeneID" id="852659"/>
<dbReference type="KEGG" id="sce:YGL213C"/>
<dbReference type="AGR" id="SGD:S000003181"/>
<dbReference type="SGD" id="S000003181">
    <property type="gene designation" value="SKI8"/>
</dbReference>
<dbReference type="VEuPathDB" id="FungiDB:YGL213C"/>
<dbReference type="eggNOG" id="KOG4155">
    <property type="taxonomic scope" value="Eukaryota"/>
</dbReference>
<dbReference type="GeneTree" id="ENSGT00940000153533"/>
<dbReference type="HOGENOM" id="CLU_065016_0_0_1"/>
<dbReference type="InParanoid" id="Q02793"/>
<dbReference type="OMA" id="CVCLDRS"/>
<dbReference type="OrthoDB" id="10251741at2759"/>
<dbReference type="BioCyc" id="YEAST:G3O-30690-MONOMER"/>
<dbReference type="Reactome" id="R-SCE-429958">
    <property type="pathway name" value="mRNA decay by 3' to 5' exoribonuclease"/>
</dbReference>
<dbReference type="BioGRID-ORCS" id="852659">
    <property type="hits" value="0 hits in 10 CRISPR screens"/>
</dbReference>
<dbReference type="EvolutionaryTrace" id="Q02793"/>
<dbReference type="PRO" id="PR:Q02793"/>
<dbReference type="Proteomes" id="UP000002311">
    <property type="component" value="Chromosome VII"/>
</dbReference>
<dbReference type="RNAct" id="Q02793">
    <property type="molecule type" value="protein"/>
</dbReference>
<dbReference type="GO" id="GO:0005737">
    <property type="term" value="C:cytoplasm"/>
    <property type="evidence" value="ECO:0000314"/>
    <property type="project" value="SGD"/>
</dbReference>
<dbReference type="GO" id="GO:0000228">
    <property type="term" value="C:nuclear chromosome"/>
    <property type="evidence" value="ECO:0000314"/>
    <property type="project" value="SGD"/>
</dbReference>
<dbReference type="GO" id="GO:0005634">
    <property type="term" value="C:nucleus"/>
    <property type="evidence" value="ECO:0000318"/>
    <property type="project" value="GO_Central"/>
</dbReference>
<dbReference type="GO" id="GO:0055087">
    <property type="term" value="C:Ski complex"/>
    <property type="evidence" value="ECO:0000314"/>
    <property type="project" value="SGD"/>
</dbReference>
<dbReference type="GO" id="GO:0051607">
    <property type="term" value="P:defense response to virus"/>
    <property type="evidence" value="ECO:0007669"/>
    <property type="project" value="UniProtKB-KW"/>
</dbReference>
<dbReference type="GO" id="GO:0006402">
    <property type="term" value="P:mRNA catabolic process"/>
    <property type="evidence" value="ECO:0000314"/>
    <property type="project" value="ComplexPortal"/>
</dbReference>
<dbReference type="GO" id="GO:0000956">
    <property type="term" value="P:nuclear-transcribed mRNA catabolic process"/>
    <property type="evidence" value="ECO:0000314"/>
    <property type="project" value="ComplexPortal"/>
</dbReference>
<dbReference type="GO" id="GO:0070478">
    <property type="term" value="P:nuclear-transcribed mRNA catabolic process, 3'-5' exonucleolytic nonsense-mediated decay"/>
    <property type="evidence" value="ECO:0000315"/>
    <property type="project" value="SGD"/>
</dbReference>
<dbReference type="GO" id="GO:0070481">
    <property type="term" value="P:nuclear-transcribed mRNA catabolic process, non-stop decay"/>
    <property type="evidence" value="ECO:0000315"/>
    <property type="project" value="SGD"/>
</dbReference>
<dbReference type="GO" id="GO:0065003">
    <property type="term" value="P:protein-containing complex assembly"/>
    <property type="evidence" value="ECO:0000315"/>
    <property type="project" value="SGD"/>
</dbReference>
<dbReference type="GO" id="GO:0065004">
    <property type="term" value="P:protein-DNA complex assembly"/>
    <property type="evidence" value="ECO:0000315"/>
    <property type="project" value="SGD"/>
</dbReference>
<dbReference type="GO" id="GO:0007131">
    <property type="term" value="P:reciprocal meiotic recombination"/>
    <property type="evidence" value="ECO:0000315"/>
    <property type="project" value="SGD"/>
</dbReference>
<dbReference type="FunFam" id="2.130.10.10:FF:001028">
    <property type="entry name" value="Antiviral protein SKI8"/>
    <property type="match status" value="1"/>
</dbReference>
<dbReference type="Gene3D" id="2.130.10.10">
    <property type="entry name" value="YVTN repeat-like/Quinoprotein amine dehydrogenase"/>
    <property type="match status" value="1"/>
</dbReference>
<dbReference type="InterPro" id="IPR051510">
    <property type="entry name" value="SKI8"/>
</dbReference>
<dbReference type="InterPro" id="IPR015943">
    <property type="entry name" value="WD40/YVTN_repeat-like_dom_sf"/>
</dbReference>
<dbReference type="InterPro" id="IPR019775">
    <property type="entry name" value="WD40_repeat_CS"/>
</dbReference>
<dbReference type="InterPro" id="IPR036322">
    <property type="entry name" value="WD40_repeat_dom_sf"/>
</dbReference>
<dbReference type="InterPro" id="IPR001680">
    <property type="entry name" value="WD40_rpt"/>
</dbReference>
<dbReference type="PANTHER" id="PTHR44090:SF1">
    <property type="entry name" value="SUPERKILLER COMPLEX PROTEIN 8"/>
    <property type="match status" value="1"/>
</dbReference>
<dbReference type="PANTHER" id="PTHR44090">
    <property type="entry name" value="WD REPEAT-CONTAINING PROTEIN 61"/>
    <property type="match status" value="1"/>
</dbReference>
<dbReference type="Pfam" id="PF00400">
    <property type="entry name" value="WD40"/>
    <property type="match status" value="2"/>
</dbReference>
<dbReference type="SMART" id="SM00320">
    <property type="entry name" value="WD40"/>
    <property type="match status" value="4"/>
</dbReference>
<dbReference type="SUPFAM" id="SSF50978">
    <property type="entry name" value="WD40 repeat-like"/>
    <property type="match status" value="1"/>
</dbReference>
<dbReference type="PROSITE" id="PS00678">
    <property type="entry name" value="WD_REPEATS_1"/>
    <property type="match status" value="2"/>
</dbReference>
<dbReference type="PROSITE" id="PS50082">
    <property type="entry name" value="WD_REPEATS_2"/>
    <property type="match status" value="1"/>
</dbReference>
<dbReference type="PROSITE" id="PS50294">
    <property type="entry name" value="WD_REPEATS_REGION"/>
    <property type="match status" value="1"/>
</dbReference>
<organism>
    <name type="scientific">Saccharomyces cerevisiae (strain ATCC 204508 / S288c)</name>
    <name type="common">Baker's yeast</name>
    <dbReference type="NCBI Taxonomy" id="559292"/>
    <lineage>
        <taxon>Eukaryota</taxon>
        <taxon>Fungi</taxon>
        <taxon>Dikarya</taxon>
        <taxon>Ascomycota</taxon>
        <taxon>Saccharomycotina</taxon>
        <taxon>Saccharomycetes</taxon>
        <taxon>Saccharomycetales</taxon>
        <taxon>Saccharomycetaceae</taxon>
        <taxon>Saccharomyces</taxon>
    </lineage>
</organism>
<keyword id="KW-0002">3D-structure</keyword>
<keyword id="KW-0051">Antiviral defense</keyword>
<keyword id="KW-0158">Chromosome</keyword>
<keyword id="KW-0963">Cytoplasm</keyword>
<keyword id="KW-0469">Meiosis</keyword>
<keyword id="KW-0539">Nucleus</keyword>
<keyword id="KW-1185">Reference proteome</keyword>
<keyword id="KW-0677">Repeat</keyword>
<keyword id="KW-0853">WD repeat</keyword>